<proteinExistence type="inferred from homology"/>
<comment type="function">
    <text evidence="1">Tetrapolymerization of the monopyrrole PBG into the hydroxymethylbilane pre-uroporphyrinogen in several discrete steps.</text>
</comment>
<comment type="catalytic activity">
    <reaction evidence="1">
        <text>4 porphobilinogen + H2O = hydroxymethylbilane + 4 NH4(+)</text>
        <dbReference type="Rhea" id="RHEA:13185"/>
        <dbReference type="ChEBI" id="CHEBI:15377"/>
        <dbReference type="ChEBI" id="CHEBI:28938"/>
        <dbReference type="ChEBI" id="CHEBI:57845"/>
        <dbReference type="ChEBI" id="CHEBI:58126"/>
        <dbReference type="EC" id="2.5.1.61"/>
    </reaction>
</comment>
<comment type="cofactor">
    <cofactor evidence="1">
        <name>dipyrromethane</name>
        <dbReference type="ChEBI" id="CHEBI:60342"/>
    </cofactor>
    <text evidence="1">Binds 1 dipyrromethane group covalently.</text>
</comment>
<comment type="pathway">
    <text evidence="1">Porphyrin-containing compound metabolism; protoporphyrin-IX biosynthesis; coproporphyrinogen-III from 5-aminolevulinate: step 2/4.</text>
</comment>
<comment type="subunit">
    <text evidence="1">Monomer.</text>
</comment>
<comment type="miscellaneous">
    <text evidence="1">The porphobilinogen subunits are added to the dipyrromethane group.</text>
</comment>
<comment type="similarity">
    <text evidence="1">Belongs to the HMBS family.</text>
</comment>
<name>HEM3_YERPP</name>
<reference key="1">
    <citation type="submission" date="2007-02" db="EMBL/GenBank/DDBJ databases">
        <title>Complete sequence of chromosome of Yersinia pestis Pestoides F.</title>
        <authorList>
            <consortium name="US DOE Joint Genome Institute"/>
            <person name="Copeland A."/>
            <person name="Lucas S."/>
            <person name="Lapidus A."/>
            <person name="Barry K."/>
            <person name="Detter J.C."/>
            <person name="Glavina del Rio T."/>
            <person name="Hammon N."/>
            <person name="Israni S."/>
            <person name="Dalin E."/>
            <person name="Tice H."/>
            <person name="Pitluck S."/>
            <person name="Di Bartolo G."/>
            <person name="Chain P."/>
            <person name="Malfatti S."/>
            <person name="Shin M."/>
            <person name="Vergez L."/>
            <person name="Schmutz J."/>
            <person name="Larimer F."/>
            <person name="Land M."/>
            <person name="Hauser L."/>
            <person name="Worsham P."/>
            <person name="Chu M."/>
            <person name="Bearden S."/>
            <person name="Garcia E."/>
            <person name="Richardson P."/>
        </authorList>
    </citation>
    <scope>NUCLEOTIDE SEQUENCE [LARGE SCALE GENOMIC DNA]</scope>
    <source>
        <strain>Pestoides F</strain>
    </source>
</reference>
<accession>A4TRA8</accession>
<protein>
    <recommendedName>
        <fullName evidence="1">Porphobilinogen deaminase</fullName>
        <shortName evidence="1">PBG</shortName>
        <ecNumber evidence="1">2.5.1.61</ecNumber>
    </recommendedName>
    <alternativeName>
        <fullName evidence="1">Hydroxymethylbilane synthase</fullName>
        <shortName evidence="1">HMBS</shortName>
    </alternativeName>
    <alternativeName>
        <fullName evidence="1">Pre-uroporphyrinogen synthase</fullName>
    </alternativeName>
</protein>
<feature type="chain" id="PRO_0000304299" description="Porphobilinogen deaminase">
    <location>
        <begin position="1"/>
        <end position="313"/>
    </location>
</feature>
<feature type="modified residue" description="S-(dipyrrolylmethanemethyl)cysteine" evidence="1">
    <location>
        <position position="242"/>
    </location>
</feature>
<sequence>MLDKIIRIATRQSPLALWQAHYVQHLLQANHPGLQIELVPMVTRGDIILDTPLAKVGGKGLFVKELELALLDGRADIAVHSMKDVPIAFPEGLGLVTICEREDPRDAFVSSHYAHLDDLPAGSVVGTSSLRRQCQLRERRPDLIIRDLRGNVGTRLAKLDNGDYQAIILAVAGLKRLGLENRIRYAMSAEESLPAVGQGAVGIECRLDDDHTRQLLAPLNHRHTELRVCAERAMNIRLEGGCQVPIGSYAELEGDTLWLRALVGAPDGSQMIRGERRGPAAEAEQMGIELADELLSRGAREILAAVYLDNPAR</sequence>
<dbReference type="EC" id="2.5.1.61" evidence="1"/>
<dbReference type="EMBL" id="CP000668">
    <property type="protein sequence ID" value="ABP41820.1"/>
    <property type="molecule type" value="Genomic_DNA"/>
</dbReference>
<dbReference type="RefSeq" id="WP_002211465.1">
    <property type="nucleotide sequence ID" value="NZ_CP009715.1"/>
</dbReference>
<dbReference type="SMR" id="A4TRA8"/>
<dbReference type="GeneID" id="57974860"/>
<dbReference type="KEGG" id="ypp:YPDSF_3467"/>
<dbReference type="PATRIC" id="fig|386656.14.peg.857"/>
<dbReference type="UniPathway" id="UPA00251">
    <property type="reaction ID" value="UER00319"/>
</dbReference>
<dbReference type="GO" id="GO:0005737">
    <property type="term" value="C:cytoplasm"/>
    <property type="evidence" value="ECO:0007669"/>
    <property type="project" value="TreeGrafter"/>
</dbReference>
<dbReference type="GO" id="GO:0004418">
    <property type="term" value="F:hydroxymethylbilane synthase activity"/>
    <property type="evidence" value="ECO:0007669"/>
    <property type="project" value="UniProtKB-UniRule"/>
</dbReference>
<dbReference type="GO" id="GO:0006782">
    <property type="term" value="P:protoporphyrinogen IX biosynthetic process"/>
    <property type="evidence" value="ECO:0007669"/>
    <property type="project" value="UniProtKB-UniRule"/>
</dbReference>
<dbReference type="CDD" id="cd13646">
    <property type="entry name" value="PBP2_EcHMBS_like"/>
    <property type="match status" value="1"/>
</dbReference>
<dbReference type="FunFam" id="3.30.160.40:FF:000002">
    <property type="entry name" value="Porphobilinogen deaminase"/>
    <property type="match status" value="1"/>
</dbReference>
<dbReference type="FunFam" id="3.40.190.10:FF:000004">
    <property type="entry name" value="Porphobilinogen deaminase"/>
    <property type="match status" value="1"/>
</dbReference>
<dbReference type="FunFam" id="3.40.190.10:FF:000005">
    <property type="entry name" value="Porphobilinogen deaminase"/>
    <property type="match status" value="1"/>
</dbReference>
<dbReference type="Gene3D" id="3.40.190.10">
    <property type="entry name" value="Periplasmic binding protein-like II"/>
    <property type="match status" value="2"/>
</dbReference>
<dbReference type="Gene3D" id="3.30.160.40">
    <property type="entry name" value="Porphobilinogen deaminase, C-terminal domain"/>
    <property type="match status" value="1"/>
</dbReference>
<dbReference type="HAMAP" id="MF_00260">
    <property type="entry name" value="Porphobil_deam"/>
    <property type="match status" value="1"/>
</dbReference>
<dbReference type="InterPro" id="IPR000860">
    <property type="entry name" value="HemC"/>
</dbReference>
<dbReference type="InterPro" id="IPR022419">
    <property type="entry name" value="Porphobilin_deaminase_cofac_BS"/>
</dbReference>
<dbReference type="InterPro" id="IPR022417">
    <property type="entry name" value="Porphobilin_deaminase_N"/>
</dbReference>
<dbReference type="InterPro" id="IPR022418">
    <property type="entry name" value="Porphobilinogen_deaminase_C"/>
</dbReference>
<dbReference type="InterPro" id="IPR036803">
    <property type="entry name" value="Porphobilinogen_deaminase_C_sf"/>
</dbReference>
<dbReference type="NCBIfam" id="TIGR00212">
    <property type="entry name" value="hemC"/>
    <property type="match status" value="1"/>
</dbReference>
<dbReference type="PANTHER" id="PTHR11557">
    <property type="entry name" value="PORPHOBILINOGEN DEAMINASE"/>
    <property type="match status" value="1"/>
</dbReference>
<dbReference type="PANTHER" id="PTHR11557:SF0">
    <property type="entry name" value="PORPHOBILINOGEN DEAMINASE"/>
    <property type="match status" value="1"/>
</dbReference>
<dbReference type="Pfam" id="PF01379">
    <property type="entry name" value="Porphobil_deam"/>
    <property type="match status" value="1"/>
</dbReference>
<dbReference type="Pfam" id="PF03900">
    <property type="entry name" value="Porphobil_deamC"/>
    <property type="match status" value="1"/>
</dbReference>
<dbReference type="PIRSF" id="PIRSF001438">
    <property type="entry name" value="4pyrrol_synth_OHMeBilane_synth"/>
    <property type="match status" value="1"/>
</dbReference>
<dbReference type="PRINTS" id="PR00151">
    <property type="entry name" value="PORPHBDMNASE"/>
</dbReference>
<dbReference type="SUPFAM" id="SSF53850">
    <property type="entry name" value="Periplasmic binding protein-like II"/>
    <property type="match status" value="1"/>
</dbReference>
<dbReference type="SUPFAM" id="SSF54782">
    <property type="entry name" value="Porphobilinogen deaminase (hydroxymethylbilane synthase), C-terminal domain"/>
    <property type="match status" value="1"/>
</dbReference>
<dbReference type="PROSITE" id="PS00533">
    <property type="entry name" value="PORPHOBILINOGEN_DEAM"/>
    <property type="match status" value="1"/>
</dbReference>
<gene>
    <name evidence="1" type="primary">hemC</name>
    <name type="ordered locus">YPDSF_3467</name>
</gene>
<organism>
    <name type="scientific">Yersinia pestis (strain Pestoides F)</name>
    <dbReference type="NCBI Taxonomy" id="386656"/>
    <lineage>
        <taxon>Bacteria</taxon>
        <taxon>Pseudomonadati</taxon>
        <taxon>Pseudomonadota</taxon>
        <taxon>Gammaproteobacteria</taxon>
        <taxon>Enterobacterales</taxon>
        <taxon>Yersiniaceae</taxon>
        <taxon>Yersinia</taxon>
    </lineage>
</organism>
<keyword id="KW-0627">Porphyrin biosynthesis</keyword>
<keyword id="KW-0808">Transferase</keyword>
<evidence type="ECO:0000255" key="1">
    <source>
        <dbReference type="HAMAP-Rule" id="MF_00260"/>
    </source>
</evidence>